<gene>
    <name evidence="2" type="primary">tuf2</name>
    <name type="ordered locus">Ecok1_39490</name>
    <name type="ORF">APECO1_2492</name>
</gene>
<keyword id="KW-0963">Cytoplasm</keyword>
<keyword id="KW-0251">Elongation factor</keyword>
<keyword id="KW-0342">GTP-binding</keyword>
<keyword id="KW-0378">Hydrolase</keyword>
<keyword id="KW-0460">Magnesium</keyword>
<keyword id="KW-0479">Metal-binding</keyword>
<keyword id="KW-0547">Nucleotide-binding</keyword>
<keyword id="KW-0648">Protein biosynthesis</keyword>
<keyword id="KW-1185">Reference proteome</keyword>
<dbReference type="EC" id="3.6.5.3" evidence="2"/>
<dbReference type="EMBL" id="CP000468">
    <property type="protein sequence ID" value="ABJ03443.1"/>
    <property type="molecule type" value="Genomic_DNA"/>
</dbReference>
<dbReference type="BMRB" id="A1AIF3"/>
<dbReference type="SMR" id="A1AIF3"/>
<dbReference type="KEGG" id="ecv:APECO1_2492"/>
<dbReference type="HOGENOM" id="CLU_007265_0_2_6"/>
<dbReference type="Proteomes" id="UP000008216">
    <property type="component" value="Chromosome"/>
</dbReference>
<dbReference type="GO" id="GO:0005829">
    <property type="term" value="C:cytosol"/>
    <property type="evidence" value="ECO:0007669"/>
    <property type="project" value="TreeGrafter"/>
</dbReference>
<dbReference type="GO" id="GO:0005525">
    <property type="term" value="F:GTP binding"/>
    <property type="evidence" value="ECO:0007669"/>
    <property type="project" value="UniProtKB-UniRule"/>
</dbReference>
<dbReference type="GO" id="GO:0003924">
    <property type="term" value="F:GTPase activity"/>
    <property type="evidence" value="ECO:0007669"/>
    <property type="project" value="InterPro"/>
</dbReference>
<dbReference type="GO" id="GO:0097216">
    <property type="term" value="F:guanosine tetraphosphate binding"/>
    <property type="evidence" value="ECO:0007669"/>
    <property type="project" value="UniProtKB-ARBA"/>
</dbReference>
<dbReference type="GO" id="GO:0003746">
    <property type="term" value="F:translation elongation factor activity"/>
    <property type="evidence" value="ECO:0007669"/>
    <property type="project" value="UniProtKB-UniRule"/>
</dbReference>
<dbReference type="CDD" id="cd01884">
    <property type="entry name" value="EF_Tu"/>
    <property type="match status" value="1"/>
</dbReference>
<dbReference type="CDD" id="cd03697">
    <property type="entry name" value="EFTU_II"/>
    <property type="match status" value="1"/>
</dbReference>
<dbReference type="CDD" id="cd03707">
    <property type="entry name" value="EFTU_III"/>
    <property type="match status" value="1"/>
</dbReference>
<dbReference type="FunFam" id="2.40.30.10:FF:000001">
    <property type="entry name" value="Elongation factor Tu"/>
    <property type="match status" value="1"/>
</dbReference>
<dbReference type="FunFam" id="3.40.50.300:FF:000003">
    <property type="entry name" value="Elongation factor Tu"/>
    <property type="match status" value="1"/>
</dbReference>
<dbReference type="Gene3D" id="3.40.50.300">
    <property type="entry name" value="P-loop containing nucleotide triphosphate hydrolases"/>
    <property type="match status" value="1"/>
</dbReference>
<dbReference type="Gene3D" id="2.40.30.10">
    <property type="entry name" value="Translation factors"/>
    <property type="match status" value="2"/>
</dbReference>
<dbReference type="HAMAP" id="MF_00118_B">
    <property type="entry name" value="EF_Tu_B"/>
    <property type="match status" value="1"/>
</dbReference>
<dbReference type="InterPro" id="IPR041709">
    <property type="entry name" value="EF-Tu_GTP-bd"/>
</dbReference>
<dbReference type="InterPro" id="IPR050055">
    <property type="entry name" value="EF-Tu_GTPase"/>
</dbReference>
<dbReference type="InterPro" id="IPR004161">
    <property type="entry name" value="EFTu-like_2"/>
</dbReference>
<dbReference type="InterPro" id="IPR033720">
    <property type="entry name" value="EFTU_2"/>
</dbReference>
<dbReference type="InterPro" id="IPR031157">
    <property type="entry name" value="G_TR_CS"/>
</dbReference>
<dbReference type="InterPro" id="IPR027417">
    <property type="entry name" value="P-loop_NTPase"/>
</dbReference>
<dbReference type="InterPro" id="IPR005225">
    <property type="entry name" value="Small_GTP-bd"/>
</dbReference>
<dbReference type="InterPro" id="IPR000795">
    <property type="entry name" value="T_Tr_GTP-bd_dom"/>
</dbReference>
<dbReference type="InterPro" id="IPR009000">
    <property type="entry name" value="Transl_B-barrel_sf"/>
</dbReference>
<dbReference type="InterPro" id="IPR009001">
    <property type="entry name" value="Transl_elong_EF1A/Init_IF2_C"/>
</dbReference>
<dbReference type="InterPro" id="IPR004541">
    <property type="entry name" value="Transl_elong_EFTu/EF1A_bac/org"/>
</dbReference>
<dbReference type="InterPro" id="IPR004160">
    <property type="entry name" value="Transl_elong_EFTu/EF1A_C"/>
</dbReference>
<dbReference type="NCBIfam" id="TIGR00485">
    <property type="entry name" value="EF-Tu"/>
    <property type="match status" value="1"/>
</dbReference>
<dbReference type="NCBIfam" id="NF000766">
    <property type="entry name" value="PRK00049.1"/>
    <property type="match status" value="1"/>
</dbReference>
<dbReference type="NCBIfam" id="NF009372">
    <property type="entry name" value="PRK12735.1"/>
    <property type="match status" value="1"/>
</dbReference>
<dbReference type="NCBIfam" id="NF009373">
    <property type="entry name" value="PRK12736.1"/>
    <property type="match status" value="1"/>
</dbReference>
<dbReference type="NCBIfam" id="TIGR00231">
    <property type="entry name" value="small_GTP"/>
    <property type="match status" value="1"/>
</dbReference>
<dbReference type="PANTHER" id="PTHR43721:SF22">
    <property type="entry name" value="ELONGATION FACTOR TU, MITOCHONDRIAL"/>
    <property type="match status" value="1"/>
</dbReference>
<dbReference type="PANTHER" id="PTHR43721">
    <property type="entry name" value="ELONGATION FACTOR TU-RELATED"/>
    <property type="match status" value="1"/>
</dbReference>
<dbReference type="Pfam" id="PF00009">
    <property type="entry name" value="GTP_EFTU"/>
    <property type="match status" value="1"/>
</dbReference>
<dbReference type="Pfam" id="PF03144">
    <property type="entry name" value="GTP_EFTU_D2"/>
    <property type="match status" value="1"/>
</dbReference>
<dbReference type="Pfam" id="PF03143">
    <property type="entry name" value="GTP_EFTU_D3"/>
    <property type="match status" value="1"/>
</dbReference>
<dbReference type="PRINTS" id="PR00315">
    <property type="entry name" value="ELONGATNFCT"/>
</dbReference>
<dbReference type="SUPFAM" id="SSF50465">
    <property type="entry name" value="EF-Tu/eEF-1alpha/eIF2-gamma C-terminal domain"/>
    <property type="match status" value="1"/>
</dbReference>
<dbReference type="SUPFAM" id="SSF52540">
    <property type="entry name" value="P-loop containing nucleoside triphosphate hydrolases"/>
    <property type="match status" value="1"/>
</dbReference>
<dbReference type="SUPFAM" id="SSF50447">
    <property type="entry name" value="Translation proteins"/>
    <property type="match status" value="1"/>
</dbReference>
<dbReference type="PROSITE" id="PS00301">
    <property type="entry name" value="G_TR_1"/>
    <property type="match status" value="1"/>
</dbReference>
<dbReference type="PROSITE" id="PS51722">
    <property type="entry name" value="G_TR_2"/>
    <property type="match status" value="1"/>
</dbReference>
<feature type="chain" id="PRO_0000337389" description="Elongation factor Tu 2">
    <location>
        <begin position="1"/>
        <end position="394"/>
    </location>
</feature>
<feature type="domain" description="tr-type G">
    <location>
        <begin position="10"/>
        <end position="204"/>
    </location>
</feature>
<feature type="region of interest" description="G1" evidence="1">
    <location>
        <begin position="19"/>
        <end position="26"/>
    </location>
</feature>
<feature type="region of interest" description="G2" evidence="1">
    <location>
        <begin position="60"/>
        <end position="64"/>
    </location>
</feature>
<feature type="region of interest" description="G3" evidence="1">
    <location>
        <begin position="81"/>
        <end position="84"/>
    </location>
</feature>
<feature type="region of interest" description="G4" evidence="1">
    <location>
        <begin position="136"/>
        <end position="139"/>
    </location>
</feature>
<feature type="region of interest" description="G5" evidence="1">
    <location>
        <begin position="174"/>
        <end position="176"/>
    </location>
</feature>
<feature type="binding site" evidence="2">
    <location>
        <begin position="19"/>
        <end position="26"/>
    </location>
    <ligand>
        <name>GTP</name>
        <dbReference type="ChEBI" id="CHEBI:37565"/>
    </ligand>
</feature>
<feature type="binding site" evidence="2">
    <location>
        <position position="26"/>
    </location>
    <ligand>
        <name>Mg(2+)</name>
        <dbReference type="ChEBI" id="CHEBI:18420"/>
    </ligand>
</feature>
<feature type="binding site" evidence="2">
    <location>
        <begin position="81"/>
        <end position="85"/>
    </location>
    <ligand>
        <name>GTP</name>
        <dbReference type="ChEBI" id="CHEBI:37565"/>
    </ligand>
</feature>
<feature type="binding site" evidence="2">
    <location>
        <begin position="136"/>
        <end position="139"/>
    </location>
    <ligand>
        <name>GTP</name>
        <dbReference type="ChEBI" id="CHEBI:37565"/>
    </ligand>
</feature>
<comment type="function">
    <text evidence="2">GTP hydrolase that promotes the GTP-dependent binding of aminoacyl-tRNA to the A-site of ribosomes during protein biosynthesis.</text>
</comment>
<comment type="catalytic activity">
    <reaction evidence="2">
        <text>GTP + H2O = GDP + phosphate + H(+)</text>
        <dbReference type="Rhea" id="RHEA:19669"/>
        <dbReference type="ChEBI" id="CHEBI:15377"/>
        <dbReference type="ChEBI" id="CHEBI:15378"/>
        <dbReference type="ChEBI" id="CHEBI:37565"/>
        <dbReference type="ChEBI" id="CHEBI:43474"/>
        <dbReference type="ChEBI" id="CHEBI:58189"/>
        <dbReference type="EC" id="3.6.5.3"/>
    </reaction>
    <physiologicalReaction direction="left-to-right" evidence="2">
        <dbReference type="Rhea" id="RHEA:19670"/>
    </physiologicalReaction>
</comment>
<comment type="subunit">
    <text evidence="2">Monomer.</text>
</comment>
<comment type="subcellular location">
    <subcellularLocation>
        <location evidence="2">Cytoplasm</location>
    </subcellularLocation>
</comment>
<comment type="similarity">
    <text evidence="2">Belongs to the TRAFAC class translation factor GTPase superfamily. Classic translation factor GTPase family. EF-Tu/EF-1A subfamily.</text>
</comment>
<name>EFTU2_ECOK1</name>
<reference key="1">
    <citation type="journal article" date="2007" name="J. Bacteriol.">
        <title>The genome sequence of avian pathogenic Escherichia coli strain O1:K1:H7 shares strong similarities with human extraintestinal pathogenic E. coli genomes.</title>
        <authorList>
            <person name="Johnson T.J."/>
            <person name="Kariyawasam S."/>
            <person name="Wannemuehler Y."/>
            <person name="Mangiamele P."/>
            <person name="Johnson S.J."/>
            <person name="Doetkott C."/>
            <person name="Skyberg J.A."/>
            <person name="Lynne A.M."/>
            <person name="Johnson J.R."/>
            <person name="Nolan L.K."/>
        </authorList>
    </citation>
    <scope>NUCLEOTIDE SEQUENCE [LARGE SCALE GENOMIC DNA]</scope>
</reference>
<organism>
    <name type="scientific">Escherichia coli O1:K1 / APEC</name>
    <dbReference type="NCBI Taxonomy" id="405955"/>
    <lineage>
        <taxon>Bacteria</taxon>
        <taxon>Pseudomonadati</taxon>
        <taxon>Pseudomonadota</taxon>
        <taxon>Gammaproteobacteria</taxon>
        <taxon>Enterobacterales</taxon>
        <taxon>Enterobacteriaceae</taxon>
        <taxon>Escherichia</taxon>
    </lineage>
</organism>
<sequence>MSKEKFERTKPHVNVGTIGHVDHGKTTLTAAITTVLAKTYGGAARAFDQIDNAPEEKARGITINTSHVEYDTPTRHYAHVDCPGHADYVKNMITGAAQMDGAILVVAATDGPMPQTREHILLGRQVGVPYIIVFLNKCDMVDDEELLELVEMEVRELLSQYDFPGDDTPIVRGSALKALEGDAEWEAKILELAGFLDSYIPEPERAIDKPFLLPIEDVFSISGRGTVVTGRVERGIIKVGEEVEIVGIKETQKSTCTGVEMFRKLLDEGRAGENVGVLLRGIKREEIERGQVLAKPGTIKPHTKFESEVYILSKDEGGRHTPFFKGYRPQFYFRTTDVTGTIELPEGVEMVMPGDNIKMVVTLIHPIAMDDGLRFAIREGGRTVGAGVVAKVLS</sequence>
<protein>
    <recommendedName>
        <fullName evidence="2">Elongation factor Tu 2</fullName>
        <shortName evidence="2">EF-Tu 2</shortName>
        <ecNumber evidence="2">3.6.5.3</ecNumber>
    </recommendedName>
</protein>
<evidence type="ECO:0000250" key="1"/>
<evidence type="ECO:0000255" key="2">
    <source>
        <dbReference type="HAMAP-Rule" id="MF_00118"/>
    </source>
</evidence>
<accession>A1AIF3</accession>
<proteinExistence type="inferred from homology"/>